<name>SUFE_YERPE</name>
<gene>
    <name evidence="1" type="primary">sufE</name>
    <name type="ordered locus">YPO2399</name>
    <name type="ordered locus">y1939</name>
    <name type="ordered locus">YP_2186</name>
</gene>
<accession>Q74TH2</accession>
<accession>Q0WEC4</accession>
<accession>Q8D0M5</accession>
<accession>Q8ZDZ5</accession>
<keyword id="KW-0963">Cytoplasm</keyword>
<keyword id="KW-1185">Reference proteome</keyword>
<feature type="chain" id="PRO_0000202134" description="Cysteine desulfuration protein SufE">
    <location>
        <begin position="1"/>
        <end position="140"/>
    </location>
</feature>
<feature type="active site" description="Cysteine persulfide intermediate" evidence="1">
    <location>
        <position position="51"/>
    </location>
</feature>
<evidence type="ECO:0000255" key="1">
    <source>
        <dbReference type="HAMAP-Rule" id="MF_01832"/>
    </source>
</evidence>
<evidence type="ECO:0000305" key="2"/>
<sequence length="140" mass="15581">MAGLPDRDKLIRNFSRCLNWEEKYLYIIELGGQLAPLTEQQRHPENLISGCQSQVWIAMTLSAEGHVIFAGDSDAAIVKGLVAVVFILYHDLTPQQIISLDVRPFFADLALSQHLTPSRSQGLEAMIRAIRTKVANLSAH</sequence>
<comment type="function">
    <text evidence="1">Participates in cysteine desulfuration mediated by SufS. Cysteine desulfuration mobilizes sulfur from L-cysteine to yield L-alanine and constitutes an essential step in sulfur metabolism for biosynthesis of a variety of sulfur-containing biomolecules. Functions as a sulfur acceptor for SufS, by mediating the direct transfer of the sulfur atom from the S-sulfanylcysteine of SufS, an intermediate product of cysteine desulfuration process.</text>
</comment>
<comment type="pathway">
    <text evidence="1">Cofactor biosynthesis; iron-sulfur cluster biosynthesis.</text>
</comment>
<comment type="subunit">
    <text evidence="1">Homodimer. Interacts with SufS.</text>
</comment>
<comment type="subcellular location">
    <subcellularLocation>
        <location evidence="1">Cytoplasm</location>
    </subcellularLocation>
</comment>
<comment type="similarity">
    <text evidence="1">Belongs to the SufE family.</text>
</comment>
<comment type="sequence caution" evidence="2">
    <conflict type="erroneous initiation">
        <sequence resource="EMBL-CDS" id="AAM85505"/>
    </conflict>
</comment>
<comment type="sequence caution" evidence="2">
    <conflict type="erroneous initiation">
        <sequence resource="EMBL-CDS" id="AAS62393"/>
    </conflict>
</comment>
<organism>
    <name type="scientific">Yersinia pestis</name>
    <dbReference type="NCBI Taxonomy" id="632"/>
    <lineage>
        <taxon>Bacteria</taxon>
        <taxon>Pseudomonadati</taxon>
        <taxon>Pseudomonadota</taxon>
        <taxon>Gammaproteobacteria</taxon>
        <taxon>Enterobacterales</taxon>
        <taxon>Yersiniaceae</taxon>
        <taxon>Yersinia</taxon>
    </lineage>
</organism>
<proteinExistence type="inferred from homology"/>
<dbReference type="EMBL" id="AL590842">
    <property type="protein sequence ID" value="CAL21027.1"/>
    <property type="molecule type" value="Genomic_DNA"/>
</dbReference>
<dbReference type="EMBL" id="AE009952">
    <property type="protein sequence ID" value="AAM85505.1"/>
    <property type="status" value="ALT_INIT"/>
    <property type="molecule type" value="Genomic_DNA"/>
</dbReference>
<dbReference type="EMBL" id="AE017042">
    <property type="protein sequence ID" value="AAS62393.1"/>
    <property type="status" value="ALT_INIT"/>
    <property type="molecule type" value="Genomic_DNA"/>
</dbReference>
<dbReference type="PIR" id="AH0292">
    <property type="entry name" value="AH0292"/>
</dbReference>
<dbReference type="RefSeq" id="WP_002211804.1">
    <property type="nucleotide sequence ID" value="NZ_WUCM01000025.1"/>
</dbReference>
<dbReference type="RefSeq" id="YP_002347364.1">
    <property type="nucleotide sequence ID" value="NC_003143.1"/>
</dbReference>
<dbReference type="SMR" id="Q74TH2"/>
<dbReference type="STRING" id="214092.YPO2399"/>
<dbReference type="PaxDb" id="214092-YPO2399"/>
<dbReference type="EnsemblBacteria" id="AAS62393">
    <property type="protein sequence ID" value="AAS62393"/>
    <property type="gene ID" value="YP_2186"/>
</dbReference>
<dbReference type="GeneID" id="57976275"/>
<dbReference type="KEGG" id="ype:YPO2399"/>
<dbReference type="KEGG" id="ypk:y1939"/>
<dbReference type="KEGG" id="ypm:YP_2186"/>
<dbReference type="PATRIC" id="fig|1028802.3.peg.620"/>
<dbReference type="eggNOG" id="COG2166">
    <property type="taxonomic scope" value="Bacteria"/>
</dbReference>
<dbReference type="HOGENOM" id="CLU_124502_1_1_6"/>
<dbReference type="OMA" id="NFSRCAN"/>
<dbReference type="OrthoDB" id="9799320at2"/>
<dbReference type="UniPathway" id="UPA00266"/>
<dbReference type="Proteomes" id="UP000000815">
    <property type="component" value="Chromosome"/>
</dbReference>
<dbReference type="Proteomes" id="UP000001019">
    <property type="component" value="Chromosome"/>
</dbReference>
<dbReference type="Proteomes" id="UP000002490">
    <property type="component" value="Chromosome"/>
</dbReference>
<dbReference type="GO" id="GO:0005737">
    <property type="term" value="C:cytoplasm"/>
    <property type="evidence" value="ECO:0007669"/>
    <property type="project" value="UniProtKB-SubCell"/>
</dbReference>
<dbReference type="GO" id="GO:0016226">
    <property type="term" value="P:iron-sulfur cluster assembly"/>
    <property type="evidence" value="ECO:0007669"/>
    <property type="project" value="InterPro"/>
</dbReference>
<dbReference type="GO" id="GO:0006790">
    <property type="term" value="P:sulfur compound metabolic process"/>
    <property type="evidence" value="ECO:0007669"/>
    <property type="project" value="InterPro"/>
</dbReference>
<dbReference type="Gene3D" id="3.90.1010.10">
    <property type="match status" value="1"/>
</dbReference>
<dbReference type="HAMAP" id="MF_01832">
    <property type="entry name" value="SufE"/>
    <property type="match status" value="1"/>
</dbReference>
<dbReference type="InterPro" id="IPR023939">
    <property type="entry name" value="Cysteine_desulfuration_SufE"/>
</dbReference>
<dbReference type="InterPro" id="IPR003808">
    <property type="entry name" value="Fe-S_metab-assoc_dom"/>
</dbReference>
<dbReference type="NCBIfam" id="NF006792">
    <property type="entry name" value="PRK09296.1"/>
    <property type="match status" value="1"/>
</dbReference>
<dbReference type="PANTHER" id="PTHR43597:SF3">
    <property type="entry name" value="CYSTEINE DESULFURATION PROTEIN SUFE"/>
    <property type="match status" value="1"/>
</dbReference>
<dbReference type="PANTHER" id="PTHR43597">
    <property type="entry name" value="SULFUR ACCEPTOR PROTEIN CSDE"/>
    <property type="match status" value="1"/>
</dbReference>
<dbReference type="Pfam" id="PF02657">
    <property type="entry name" value="SufE"/>
    <property type="match status" value="1"/>
</dbReference>
<dbReference type="SUPFAM" id="SSF82649">
    <property type="entry name" value="SufE/NifU"/>
    <property type="match status" value="1"/>
</dbReference>
<protein>
    <recommendedName>
        <fullName evidence="1">Cysteine desulfuration protein SufE</fullName>
    </recommendedName>
</protein>
<reference key="1">
    <citation type="journal article" date="2001" name="Nature">
        <title>Genome sequence of Yersinia pestis, the causative agent of plague.</title>
        <authorList>
            <person name="Parkhill J."/>
            <person name="Wren B.W."/>
            <person name="Thomson N.R."/>
            <person name="Titball R.W."/>
            <person name="Holden M.T.G."/>
            <person name="Prentice M.B."/>
            <person name="Sebaihia M."/>
            <person name="James K.D."/>
            <person name="Churcher C.M."/>
            <person name="Mungall K.L."/>
            <person name="Baker S."/>
            <person name="Basham D."/>
            <person name="Bentley S.D."/>
            <person name="Brooks K."/>
            <person name="Cerdeno-Tarraga A.-M."/>
            <person name="Chillingworth T."/>
            <person name="Cronin A."/>
            <person name="Davies R.M."/>
            <person name="Davis P."/>
            <person name="Dougan G."/>
            <person name="Feltwell T."/>
            <person name="Hamlin N."/>
            <person name="Holroyd S."/>
            <person name="Jagels K."/>
            <person name="Karlyshev A.V."/>
            <person name="Leather S."/>
            <person name="Moule S."/>
            <person name="Oyston P.C.F."/>
            <person name="Quail M.A."/>
            <person name="Rutherford K.M."/>
            <person name="Simmonds M."/>
            <person name="Skelton J."/>
            <person name="Stevens K."/>
            <person name="Whitehead S."/>
            <person name="Barrell B.G."/>
        </authorList>
    </citation>
    <scope>NUCLEOTIDE SEQUENCE [LARGE SCALE GENOMIC DNA]</scope>
    <source>
        <strain>CO-92 / Biovar Orientalis</strain>
    </source>
</reference>
<reference key="2">
    <citation type="journal article" date="2002" name="J. Bacteriol.">
        <title>Genome sequence of Yersinia pestis KIM.</title>
        <authorList>
            <person name="Deng W."/>
            <person name="Burland V."/>
            <person name="Plunkett G. III"/>
            <person name="Boutin A."/>
            <person name="Mayhew G.F."/>
            <person name="Liss P."/>
            <person name="Perna N.T."/>
            <person name="Rose D.J."/>
            <person name="Mau B."/>
            <person name="Zhou S."/>
            <person name="Schwartz D.C."/>
            <person name="Fetherston J.D."/>
            <person name="Lindler L.E."/>
            <person name="Brubaker R.R."/>
            <person name="Plano G.V."/>
            <person name="Straley S.C."/>
            <person name="McDonough K.A."/>
            <person name="Nilles M.L."/>
            <person name="Matson J.S."/>
            <person name="Blattner F.R."/>
            <person name="Perry R.D."/>
        </authorList>
    </citation>
    <scope>NUCLEOTIDE SEQUENCE [LARGE SCALE GENOMIC DNA]</scope>
    <source>
        <strain>KIM10+ / Biovar Mediaevalis</strain>
    </source>
</reference>
<reference key="3">
    <citation type="journal article" date="2004" name="DNA Res.">
        <title>Complete genome sequence of Yersinia pestis strain 91001, an isolate avirulent to humans.</title>
        <authorList>
            <person name="Song Y."/>
            <person name="Tong Z."/>
            <person name="Wang J."/>
            <person name="Wang L."/>
            <person name="Guo Z."/>
            <person name="Han Y."/>
            <person name="Zhang J."/>
            <person name="Pei D."/>
            <person name="Zhou D."/>
            <person name="Qin H."/>
            <person name="Pang X."/>
            <person name="Han Y."/>
            <person name="Zhai J."/>
            <person name="Li M."/>
            <person name="Cui B."/>
            <person name="Qi Z."/>
            <person name="Jin L."/>
            <person name="Dai R."/>
            <person name="Chen F."/>
            <person name="Li S."/>
            <person name="Ye C."/>
            <person name="Du Z."/>
            <person name="Lin W."/>
            <person name="Wang J."/>
            <person name="Yu J."/>
            <person name="Yang H."/>
            <person name="Wang J."/>
            <person name="Huang P."/>
            <person name="Yang R."/>
        </authorList>
    </citation>
    <scope>NUCLEOTIDE SEQUENCE [LARGE SCALE GENOMIC DNA]</scope>
    <source>
        <strain>91001 / Biovar Mediaevalis</strain>
    </source>
</reference>